<dbReference type="EMBL" id="CP000753">
    <property type="protein sequence ID" value="ABS07064.1"/>
    <property type="molecule type" value="Genomic_DNA"/>
</dbReference>
<dbReference type="RefSeq" id="WP_011847653.1">
    <property type="nucleotide sequence ID" value="NC_009665.1"/>
</dbReference>
<dbReference type="SMR" id="A6WJS5"/>
<dbReference type="KEGG" id="sbm:Shew185_0910"/>
<dbReference type="HOGENOM" id="CLU_005912_9_2_6"/>
<dbReference type="GO" id="GO:0005886">
    <property type="term" value="C:plasma membrane"/>
    <property type="evidence" value="ECO:0007669"/>
    <property type="project" value="UniProtKB-SubCell"/>
</dbReference>
<dbReference type="GO" id="GO:0050660">
    <property type="term" value="F:flavin adenine dinucleotide binding"/>
    <property type="evidence" value="ECO:0007669"/>
    <property type="project" value="InterPro"/>
</dbReference>
<dbReference type="GO" id="GO:0015386">
    <property type="term" value="F:potassium:proton antiporter activity"/>
    <property type="evidence" value="ECO:0007669"/>
    <property type="project" value="UniProtKB-UniRule"/>
</dbReference>
<dbReference type="GO" id="GO:0006884">
    <property type="term" value="P:cell volume homeostasis"/>
    <property type="evidence" value="ECO:0007669"/>
    <property type="project" value="InterPro"/>
</dbReference>
<dbReference type="Gene3D" id="1.20.1530.20">
    <property type="match status" value="1"/>
</dbReference>
<dbReference type="Gene3D" id="3.30.70.1450">
    <property type="entry name" value="Regulator of K+ conductance, C-terminal domain"/>
    <property type="match status" value="1"/>
</dbReference>
<dbReference type="HAMAP" id="MF_01075">
    <property type="entry name" value="NhaP2"/>
    <property type="match status" value="1"/>
</dbReference>
<dbReference type="InterPro" id="IPR006153">
    <property type="entry name" value="Cation/H_exchanger_TM"/>
</dbReference>
<dbReference type="InterPro" id="IPR036318">
    <property type="entry name" value="FAD-bd_PCMH-like_sf"/>
</dbReference>
<dbReference type="InterPro" id="IPR038770">
    <property type="entry name" value="Na+/solute_symporter_sf"/>
</dbReference>
<dbReference type="InterPro" id="IPR023729">
    <property type="entry name" value="NhaP2"/>
</dbReference>
<dbReference type="InterPro" id="IPR006037">
    <property type="entry name" value="RCK_C"/>
</dbReference>
<dbReference type="InterPro" id="IPR036721">
    <property type="entry name" value="RCK_C_sf"/>
</dbReference>
<dbReference type="InterPro" id="IPR005170">
    <property type="entry name" value="Transptr-assoc_dom"/>
</dbReference>
<dbReference type="NCBIfam" id="NF003714">
    <property type="entry name" value="PRK05326.1-1"/>
    <property type="match status" value="1"/>
</dbReference>
<dbReference type="NCBIfam" id="NF003715">
    <property type="entry name" value="PRK05326.1-2"/>
    <property type="match status" value="1"/>
</dbReference>
<dbReference type="NCBIfam" id="NF003716">
    <property type="entry name" value="PRK05326.1-3"/>
    <property type="match status" value="1"/>
</dbReference>
<dbReference type="PANTHER" id="PTHR32507:SF7">
    <property type="entry name" value="K(+)_H(+) ANTIPORTER NHAP2"/>
    <property type="match status" value="1"/>
</dbReference>
<dbReference type="PANTHER" id="PTHR32507">
    <property type="entry name" value="NA(+)/H(+) ANTIPORTER 1"/>
    <property type="match status" value="1"/>
</dbReference>
<dbReference type="Pfam" id="PF03471">
    <property type="entry name" value="CorC_HlyC"/>
    <property type="match status" value="1"/>
</dbReference>
<dbReference type="Pfam" id="PF00999">
    <property type="entry name" value="Na_H_Exchanger"/>
    <property type="match status" value="1"/>
</dbReference>
<dbReference type="Pfam" id="PF02080">
    <property type="entry name" value="TrkA_C"/>
    <property type="match status" value="1"/>
</dbReference>
<dbReference type="SMART" id="SM01091">
    <property type="entry name" value="CorC_HlyC"/>
    <property type="match status" value="1"/>
</dbReference>
<dbReference type="SUPFAM" id="SSF56176">
    <property type="entry name" value="FAD-binding/transporter-associated domain-like"/>
    <property type="match status" value="1"/>
</dbReference>
<dbReference type="SUPFAM" id="SSF116726">
    <property type="entry name" value="TrkA C-terminal domain-like"/>
    <property type="match status" value="1"/>
</dbReference>
<dbReference type="PROSITE" id="PS51202">
    <property type="entry name" value="RCK_C"/>
    <property type="match status" value="1"/>
</dbReference>
<reference key="1">
    <citation type="submission" date="2007-07" db="EMBL/GenBank/DDBJ databases">
        <title>Complete sequence of chromosome of Shewanella baltica OS185.</title>
        <authorList>
            <consortium name="US DOE Joint Genome Institute"/>
            <person name="Copeland A."/>
            <person name="Lucas S."/>
            <person name="Lapidus A."/>
            <person name="Barry K."/>
            <person name="Glavina del Rio T."/>
            <person name="Dalin E."/>
            <person name="Tice H."/>
            <person name="Pitluck S."/>
            <person name="Sims D."/>
            <person name="Brettin T."/>
            <person name="Bruce D."/>
            <person name="Detter J.C."/>
            <person name="Han C."/>
            <person name="Schmutz J."/>
            <person name="Larimer F."/>
            <person name="Land M."/>
            <person name="Hauser L."/>
            <person name="Kyrpides N."/>
            <person name="Mikhailova N."/>
            <person name="Brettar I."/>
            <person name="Rodrigues J."/>
            <person name="Konstantinidis K."/>
            <person name="Tiedje J."/>
            <person name="Richardson P."/>
        </authorList>
    </citation>
    <scope>NUCLEOTIDE SEQUENCE [LARGE SCALE GENOMIC DNA]</scope>
    <source>
        <strain>OS185</strain>
    </source>
</reference>
<keyword id="KW-0050">Antiport</keyword>
<keyword id="KW-0997">Cell inner membrane</keyword>
<keyword id="KW-1003">Cell membrane</keyword>
<keyword id="KW-0406">Ion transport</keyword>
<keyword id="KW-0472">Membrane</keyword>
<keyword id="KW-0630">Potassium</keyword>
<keyword id="KW-0633">Potassium transport</keyword>
<keyword id="KW-0812">Transmembrane</keyword>
<keyword id="KW-1133">Transmembrane helix</keyword>
<keyword id="KW-0813">Transport</keyword>
<comment type="function">
    <text evidence="1">K(+)/H(+) antiporter that extrudes potassium in exchange for external protons and maintains the internal concentration of potassium under toxic levels.</text>
</comment>
<comment type="catalytic activity">
    <reaction evidence="1">
        <text>K(+)(in) + H(+)(out) = K(+)(out) + H(+)(in)</text>
        <dbReference type="Rhea" id="RHEA:29467"/>
        <dbReference type="ChEBI" id="CHEBI:15378"/>
        <dbReference type="ChEBI" id="CHEBI:29103"/>
    </reaction>
    <physiologicalReaction direction="left-to-right" evidence="1">
        <dbReference type="Rhea" id="RHEA:29468"/>
    </physiologicalReaction>
</comment>
<comment type="subcellular location">
    <subcellularLocation>
        <location evidence="1">Cell inner membrane</location>
        <topology evidence="1">Multi-pass membrane protein</topology>
    </subcellularLocation>
</comment>
<comment type="similarity">
    <text evidence="1">Belongs to the monovalent cation:proton antiporter 1 (CPA1) transporter (TC 2.A.36) family. NhaP2 subfamily.</text>
</comment>
<proteinExistence type="inferred from homology"/>
<name>NHAP2_SHEB8</name>
<gene>
    <name evidence="1" type="primary">nhaP2</name>
    <name type="synonym">cvrA</name>
    <name type="ordered locus">Shew185_0910</name>
</gene>
<organism>
    <name type="scientific">Shewanella baltica (strain OS185)</name>
    <dbReference type="NCBI Taxonomy" id="402882"/>
    <lineage>
        <taxon>Bacteria</taxon>
        <taxon>Pseudomonadati</taxon>
        <taxon>Pseudomonadota</taxon>
        <taxon>Gammaproteobacteria</taxon>
        <taxon>Alteromonadales</taxon>
        <taxon>Shewanellaceae</taxon>
        <taxon>Shewanella</taxon>
    </lineage>
</organism>
<protein>
    <recommendedName>
        <fullName evidence="1">K(+)/H(+) antiporter NhaP2</fullName>
    </recommendedName>
    <alternativeName>
        <fullName evidence="1">Potassium/proton antiporter NhaP2</fullName>
    </alternativeName>
</protein>
<sequence>MDANSINSFFLIGALLTAVSVLLSPMSSRLGIPILLIFLAVGILAGEDGPGGILFDDYSTAYLVSNLALAIILLDGGMRTRVASFRVALWPALSLATFGVAITTSITGMMAAWLFDLHWLQGLLVGAIVGSTDAAAVFSLLKGRSLNERVGATLEIESGSNDPMAVFLTVTLIAILANVDTEMSFSFMFISFIKQFGLGICLGLGGGWMLWKLVNLSKLADGLYSILVLSGGLIIYAASNKLGGSGILSIYLVGLFLGNKPTRGRHAILNVLDGMTWVSQIGMFLVLGLLLTPSDLVDILIPGFALAFGMILFARPVAVWISLLPFKSFSSRDRWFISWVGLRGAVPIILAVFPMMAGLPGAQLYFNLAFFVVLVSLLVQGASLTTAARLAKVELPPKPLPVSRSGVEIYPSSEWEVFVYRLSESKWCIGEPLKRLAMPDGTRIAAVFRNDTLLHPSGSTRLEAGDILCVLGQEKSLEALSNLFSQAPENKEVQRFFGDFFIETDVKLADLAPIYGLSLDNLADDMTVADLVVSQLGANPVLGDQFQWQSLHWVVAGLYEGKVTNVGIRLPTEHAL</sequence>
<accession>A6WJS5</accession>
<feature type="chain" id="PRO_1000064673" description="K(+)/H(+) antiporter NhaP2">
    <location>
        <begin position="1"/>
        <end position="576"/>
    </location>
</feature>
<feature type="transmembrane region" description="Helical" evidence="1">
    <location>
        <begin position="6"/>
        <end position="26"/>
    </location>
</feature>
<feature type="transmembrane region" description="Helical" evidence="1">
    <location>
        <begin position="34"/>
        <end position="54"/>
    </location>
</feature>
<feature type="transmembrane region" description="Helical" evidence="1">
    <location>
        <begin position="58"/>
        <end position="78"/>
    </location>
</feature>
<feature type="transmembrane region" description="Helical" evidence="1">
    <location>
        <begin position="87"/>
        <end position="107"/>
    </location>
</feature>
<feature type="transmembrane region" description="Helical" evidence="1">
    <location>
        <begin position="109"/>
        <end position="129"/>
    </location>
</feature>
<feature type="transmembrane region" description="Helical" evidence="1">
    <location>
        <begin position="163"/>
        <end position="183"/>
    </location>
</feature>
<feature type="transmembrane region" description="Helical" evidence="1">
    <location>
        <begin position="185"/>
        <end position="205"/>
    </location>
</feature>
<feature type="transmembrane region" description="Helical" evidence="1">
    <location>
        <begin position="219"/>
        <end position="239"/>
    </location>
</feature>
<feature type="transmembrane region" description="Helical" evidence="1">
    <location>
        <begin position="242"/>
        <end position="262"/>
    </location>
</feature>
<feature type="transmembrane region" description="Helical" evidence="1">
    <location>
        <begin position="271"/>
        <end position="291"/>
    </location>
</feature>
<feature type="transmembrane region" description="Helical" evidence="1">
    <location>
        <begin position="299"/>
        <end position="319"/>
    </location>
</feature>
<feature type="transmembrane region" description="Helical" evidence="1">
    <location>
        <begin position="335"/>
        <end position="355"/>
    </location>
</feature>
<feature type="transmembrane region" description="Helical" evidence="1">
    <location>
        <begin position="359"/>
        <end position="379"/>
    </location>
</feature>
<feature type="domain" description="RCK C-terminal" evidence="1">
    <location>
        <begin position="405"/>
        <end position="486"/>
    </location>
</feature>
<evidence type="ECO:0000255" key="1">
    <source>
        <dbReference type="HAMAP-Rule" id="MF_01075"/>
    </source>
</evidence>